<accession>P85145</accession>
<protein>
    <recommendedName>
        <fullName>U14-ctenitoxin-Co1b</fullName>
        <shortName>U14-CNTX-Co1b</shortName>
    </recommendedName>
    <alternativeName>
        <fullName>Venom protein Oct F17-12</fullName>
    </alternativeName>
</protein>
<organism>
    <name type="scientific">Ctenus ornatus</name>
    <name type="common">Brazilian spider</name>
    <name type="synonym">Oligoctenus ornatus</name>
    <dbReference type="NCBI Taxonomy" id="406443"/>
    <lineage>
        <taxon>Eukaryota</taxon>
        <taxon>Metazoa</taxon>
        <taxon>Ecdysozoa</taxon>
        <taxon>Arthropoda</taxon>
        <taxon>Chelicerata</taxon>
        <taxon>Arachnida</taxon>
        <taxon>Araneae</taxon>
        <taxon>Araneomorphae</taxon>
        <taxon>Entelegynae</taxon>
        <taxon>Lycosoidea</taxon>
        <taxon>Ctenidae</taxon>
        <taxon>Oligoctenus</taxon>
    </lineage>
</organism>
<keyword id="KW-0903">Direct protein sequencing</keyword>
<keyword id="KW-0964">Secreted</keyword>
<evidence type="ECO:0000269" key="1">
    <source ref="1"/>
</evidence>
<evidence type="ECO:0000303" key="2">
    <source ref="1"/>
</evidence>
<evidence type="ECO:0000305" key="3"/>
<reference evidence="3" key="1">
    <citation type="submission" date="2007-04" db="UniProtKB">
        <title>Protein Oct F17-12 from venom of spider Oligoctenus ornatus has strong sequence similarities with Tx3-4 type neurotoxins from Phoneutria spiders.</title>
        <authorList>
            <person name="Borges M.H."/>
            <person name="Oliveira C.F.B."/>
            <person name="Goncalves J.M."/>
            <person name="Rates B."/>
            <person name="Santos D.M."/>
            <person name="Pimenta A.M.C."/>
            <person name="Cordeiro M.N."/>
            <person name="Richardson M."/>
        </authorList>
    </citation>
    <scope>PROTEIN SEQUENCE</scope>
    <scope>SUBCELLULAR LOCATION</scope>
    <scope>TISSUE SPECIFICITY</scope>
    <scope>MASS SPECTROMETRY</scope>
    <source>
        <tissue evidence="1">Venom</tissue>
    </source>
</reference>
<dbReference type="ArachnoServer" id="AS000039">
    <property type="toxin name" value="U14-ctenitoxin-Co1b"/>
</dbReference>
<dbReference type="GO" id="GO:0005576">
    <property type="term" value="C:extracellular region"/>
    <property type="evidence" value="ECO:0007669"/>
    <property type="project" value="UniProtKB-SubCell"/>
</dbReference>
<dbReference type="GO" id="GO:0090729">
    <property type="term" value="F:toxin activity"/>
    <property type="evidence" value="ECO:0007669"/>
    <property type="project" value="InterPro"/>
</dbReference>
<dbReference type="InterPro" id="IPR013605">
    <property type="entry name" value="Toxin_34"/>
</dbReference>
<dbReference type="Pfam" id="PF08396">
    <property type="entry name" value="Toxin_34"/>
    <property type="match status" value="1"/>
</dbReference>
<proteinExistence type="evidence at protein level"/>
<name>F1712_CTEON</name>
<comment type="function">
    <text evidence="1">Not toxic to mice by intracerebroventricular injection.</text>
</comment>
<comment type="subcellular location">
    <subcellularLocation>
        <location evidence="1">Secreted</location>
    </subcellularLocation>
</comment>
<comment type="tissue specificity">
    <text evidence="1">Expressed by the venom gland.</text>
</comment>
<comment type="mass spectrometry" mass="8029.4" error="0.57" method="Electrospray" evidence="1"/>
<comment type="similarity">
    <text evidence="3">Belongs to the neurotoxin 04 (omega-agtx) family. 03 (type II/III omega-agtx) subfamily.</text>
</comment>
<sequence length="36" mass="4035">GSCLELGKYCDGSKDDCQCCRDNAYCGCDIFGYNWE</sequence>
<feature type="chain" id="PRO_0000287676" description="U14-ctenitoxin-Co1b">
    <location>
        <begin position="1"/>
        <end position="36" status="greater than"/>
    </location>
</feature>
<feature type="non-terminal residue" evidence="2">
    <location>
        <position position="36"/>
    </location>
</feature>